<organism>
    <name type="scientific">Leptospira borgpetersenii serovar Hardjo-bovis (strain JB197)</name>
    <dbReference type="NCBI Taxonomy" id="355277"/>
    <lineage>
        <taxon>Bacteria</taxon>
        <taxon>Pseudomonadati</taxon>
        <taxon>Spirochaetota</taxon>
        <taxon>Spirochaetia</taxon>
        <taxon>Leptospirales</taxon>
        <taxon>Leptospiraceae</taxon>
        <taxon>Leptospira</taxon>
    </lineage>
</organism>
<dbReference type="EC" id="4.1.1.50" evidence="1"/>
<dbReference type="EMBL" id="CP000351">
    <property type="protein sequence ID" value="ABJ77609.1"/>
    <property type="molecule type" value="Genomic_DNA"/>
</dbReference>
<dbReference type="SMR" id="Q04NB1"/>
<dbReference type="KEGG" id="lbj:LBJ_4230"/>
<dbReference type="HOGENOM" id="CLU_125470_2_3_12"/>
<dbReference type="UniPathway" id="UPA00331">
    <property type="reaction ID" value="UER00451"/>
</dbReference>
<dbReference type="Proteomes" id="UP000000656">
    <property type="component" value="Chromosome 2"/>
</dbReference>
<dbReference type="GO" id="GO:0005829">
    <property type="term" value="C:cytosol"/>
    <property type="evidence" value="ECO:0007669"/>
    <property type="project" value="TreeGrafter"/>
</dbReference>
<dbReference type="GO" id="GO:0004014">
    <property type="term" value="F:adenosylmethionine decarboxylase activity"/>
    <property type="evidence" value="ECO:0007669"/>
    <property type="project" value="UniProtKB-UniRule"/>
</dbReference>
<dbReference type="GO" id="GO:0008295">
    <property type="term" value="P:spermidine biosynthetic process"/>
    <property type="evidence" value="ECO:0007669"/>
    <property type="project" value="UniProtKB-UniRule"/>
</dbReference>
<dbReference type="FunFam" id="3.30.160.750:FF:000004">
    <property type="entry name" value="S-adenosylmethionine decarboxylase proenzyme"/>
    <property type="match status" value="1"/>
</dbReference>
<dbReference type="FunFam" id="3.30.360.110:FF:000001">
    <property type="entry name" value="S-adenosylmethionine decarboxylase proenzyme"/>
    <property type="match status" value="1"/>
</dbReference>
<dbReference type="Gene3D" id="3.30.160.750">
    <property type="match status" value="1"/>
</dbReference>
<dbReference type="Gene3D" id="3.30.360.110">
    <property type="entry name" value="S-adenosylmethionine decarboxylase domain"/>
    <property type="match status" value="1"/>
</dbReference>
<dbReference type="HAMAP" id="MF_00464">
    <property type="entry name" value="AdoMetDC_1"/>
    <property type="match status" value="1"/>
</dbReference>
<dbReference type="InterPro" id="IPR042286">
    <property type="entry name" value="AdoMetDC_C"/>
</dbReference>
<dbReference type="InterPro" id="IPR003826">
    <property type="entry name" value="AdoMetDC_fam_prok"/>
</dbReference>
<dbReference type="InterPro" id="IPR042284">
    <property type="entry name" value="AdoMetDC_N"/>
</dbReference>
<dbReference type="InterPro" id="IPR016067">
    <property type="entry name" value="S-AdoMet_deCO2ase_core"/>
</dbReference>
<dbReference type="InterPro" id="IPR017716">
    <property type="entry name" value="S-AdoMet_deCOase_pro-enz"/>
</dbReference>
<dbReference type="NCBIfam" id="TIGR03330">
    <property type="entry name" value="SAM_DCase_Bsu"/>
    <property type="match status" value="1"/>
</dbReference>
<dbReference type="PANTHER" id="PTHR33866">
    <property type="entry name" value="S-ADENOSYLMETHIONINE DECARBOXYLASE PROENZYME"/>
    <property type="match status" value="1"/>
</dbReference>
<dbReference type="PANTHER" id="PTHR33866:SF2">
    <property type="entry name" value="S-ADENOSYLMETHIONINE DECARBOXYLASE PROENZYME"/>
    <property type="match status" value="1"/>
</dbReference>
<dbReference type="Pfam" id="PF02675">
    <property type="entry name" value="AdoMet_dc"/>
    <property type="match status" value="1"/>
</dbReference>
<dbReference type="SUPFAM" id="SSF56276">
    <property type="entry name" value="S-adenosylmethionine decarboxylase"/>
    <property type="match status" value="1"/>
</dbReference>
<comment type="function">
    <text evidence="1">Catalyzes the decarboxylation of S-adenosylmethionine to S-adenosylmethioninamine (dcAdoMet), the propylamine donor required for the synthesis of the polyamines spermine and spermidine from the diamine putrescine.</text>
</comment>
<comment type="catalytic activity">
    <reaction evidence="1">
        <text>S-adenosyl-L-methionine + H(+) = S-adenosyl 3-(methylsulfanyl)propylamine + CO2</text>
        <dbReference type="Rhea" id="RHEA:15981"/>
        <dbReference type="ChEBI" id="CHEBI:15378"/>
        <dbReference type="ChEBI" id="CHEBI:16526"/>
        <dbReference type="ChEBI" id="CHEBI:57443"/>
        <dbReference type="ChEBI" id="CHEBI:59789"/>
        <dbReference type="EC" id="4.1.1.50"/>
    </reaction>
</comment>
<comment type="cofactor">
    <cofactor evidence="1">
        <name>pyruvate</name>
        <dbReference type="ChEBI" id="CHEBI:15361"/>
    </cofactor>
    <text evidence="1">Binds 1 pyruvoyl group covalently per subunit.</text>
</comment>
<comment type="pathway">
    <text evidence="1">Amine and polyamine biosynthesis; S-adenosylmethioninamine biosynthesis; S-adenosylmethioninamine from S-adenosyl-L-methionine: step 1/1.</text>
</comment>
<comment type="subunit">
    <text evidence="1">Heterotetramer of two alpha and two beta chains arranged as a dimer of alpha/beta heterodimers.</text>
</comment>
<comment type="PTM">
    <text evidence="1">Is synthesized initially as an inactive proenzyme. Formation of the active enzyme involves a self-maturation process in which the active site pyruvoyl group is generated from an internal serine residue via an autocatalytic post-translational modification. Two non-identical subunits are generated from the proenzyme in this reaction, and the pyruvate is formed at the N-terminus of the alpha chain, which is derived from the carboxyl end of the proenzyme. The post-translation cleavage follows an unusual pathway, termed non-hydrolytic serinolysis, in which the side chain hydroxyl group of the serine supplies its oxygen atom to form the C-terminus of the beta chain, while the remainder of the serine residue undergoes an oxidative deamination to produce ammonia and the pyruvoyl group blocking the N-terminus of the alpha chain.</text>
</comment>
<comment type="similarity">
    <text evidence="1">Belongs to the prokaryotic AdoMetDC family. Type 1 subfamily.</text>
</comment>
<accession>Q04NB1</accession>
<evidence type="ECO:0000255" key="1">
    <source>
        <dbReference type="HAMAP-Rule" id="MF_00464"/>
    </source>
</evidence>
<reference key="1">
    <citation type="journal article" date="2006" name="Proc. Natl. Acad. Sci. U.S.A.">
        <title>Genome reduction in Leptospira borgpetersenii reflects limited transmission potential.</title>
        <authorList>
            <person name="Bulach D.M."/>
            <person name="Zuerner R.L."/>
            <person name="Wilson P."/>
            <person name="Seemann T."/>
            <person name="McGrath A."/>
            <person name="Cullen P.A."/>
            <person name="Davis J."/>
            <person name="Johnson M."/>
            <person name="Kuczek E."/>
            <person name="Alt D.P."/>
            <person name="Peterson-Burch B."/>
            <person name="Coppel R.L."/>
            <person name="Rood J.I."/>
            <person name="Davies J.K."/>
            <person name="Adler B."/>
        </authorList>
    </citation>
    <scope>NUCLEOTIDE SEQUENCE [LARGE SCALE GENOMIC DNA]</scope>
    <source>
        <strain>JB197</strain>
    </source>
</reference>
<proteinExistence type="inferred from homology"/>
<keyword id="KW-0068">Autocatalytic cleavage</keyword>
<keyword id="KW-0210">Decarboxylase</keyword>
<keyword id="KW-0456">Lyase</keyword>
<keyword id="KW-0620">Polyamine biosynthesis</keyword>
<keyword id="KW-0670">Pyruvate</keyword>
<keyword id="KW-0949">S-adenosyl-L-methionine</keyword>
<keyword id="KW-0704">Schiff base</keyword>
<keyword id="KW-0745">Spermidine biosynthesis</keyword>
<keyword id="KW-0865">Zymogen</keyword>
<protein>
    <recommendedName>
        <fullName evidence="1">S-adenosylmethionine decarboxylase proenzyme</fullName>
        <shortName evidence="1">AdoMetDC</shortName>
        <shortName evidence="1">SAMDC</shortName>
        <ecNumber evidence="1">4.1.1.50</ecNumber>
    </recommendedName>
    <component>
        <recommendedName>
            <fullName evidence="1">S-adenosylmethionine decarboxylase beta chain</fullName>
        </recommendedName>
    </component>
    <component>
        <recommendedName>
            <fullName evidence="1">S-adenosylmethionine decarboxylase alpha chain</fullName>
        </recommendedName>
    </component>
</protein>
<feature type="chain" id="PRO_1000013673" description="S-adenosylmethionine decarboxylase beta chain" evidence="1">
    <location>
        <begin position="1"/>
        <end position="62"/>
    </location>
</feature>
<feature type="chain" id="PRO_0000315026" description="S-adenosylmethionine decarboxylase alpha chain" evidence="1">
    <location>
        <begin position="63"/>
        <end position="128"/>
    </location>
</feature>
<feature type="active site" description="Schiff-base intermediate with substrate; via pyruvic acid" evidence="1">
    <location>
        <position position="63"/>
    </location>
</feature>
<feature type="active site" description="Proton acceptor; for processing activity" evidence="1">
    <location>
        <position position="68"/>
    </location>
</feature>
<feature type="active site" description="Proton donor; for catalytic activity" evidence="1">
    <location>
        <position position="83"/>
    </location>
</feature>
<feature type="site" description="Cleavage (non-hydrolytic); by autolysis" evidence="1">
    <location>
        <begin position="62"/>
        <end position="63"/>
    </location>
</feature>
<feature type="modified residue" description="Pyruvic acid (Ser); by autocatalysis" evidence="1">
    <location>
        <position position="63"/>
    </location>
</feature>
<sequence length="128" mass="14221">MNALGKHVIAEFYECDYETINNHELVEDIMLKSVDLSGATTIKSVFHRFSPYGVSGVVVVSESHFAIHTWPEYGYCAVDVFTCGDLIDNQAALDYLKEKFGSKNVSVVEMKRGVLNLGVDLHHKPVGN</sequence>
<gene>
    <name evidence="1" type="primary">speH</name>
    <name type="ordered locus">LBJ_4230</name>
</gene>
<name>SPEH_LEPBJ</name>